<proteinExistence type="inferred from homology"/>
<organism>
    <name type="scientific">Pectobacterium atrosepticum (strain SCRI 1043 / ATCC BAA-672)</name>
    <name type="common">Erwinia carotovora subsp. atroseptica</name>
    <dbReference type="NCBI Taxonomy" id="218491"/>
    <lineage>
        <taxon>Bacteria</taxon>
        <taxon>Pseudomonadati</taxon>
        <taxon>Pseudomonadota</taxon>
        <taxon>Gammaproteobacteria</taxon>
        <taxon>Enterobacterales</taxon>
        <taxon>Pectobacteriaceae</taxon>
        <taxon>Pectobacterium</taxon>
    </lineage>
</organism>
<name>RECX_PECAS</name>
<accession>Q6D1S9</accession>
<feature type="chain" id="PRO_0000162433" description="Regulatory protein RecX">
    <location>
        <begin position="1"/>
        <end position="162"/>
    </location>
</feature>
<protein>
    <recommendedName>
        <fullName evidence="1">Regulatory protein RecX</fullName>
    </recommendedName>
</protein>
<gene>
    <name evidence="1" type="primary">recX</name>
    <name type="ordered locus">ECA3368</name>
</gene>
<sequence>MNKPLRYAMNVLSVRDYSEVEIRRKCAAYLYKSEGTESEADEAIAQATAEDVEAAIAYCKEHGWLDDARYARRYISSRSRKGYGVQRIRMELSQKGIDKTTLTTALNESDIDWCILAKSVVERKFGHPLSDEWKDKVKHQRYLLYRGFFHEEIQSIYTNFSD</sequence>
<comment type="function">
    <text evidence="1">Modulates RecA activity.</text>
</comment>
<comment type="subcellular location">
    <subcellularLocation>
        <location evidence="1">Cytoplasm</location>
    </subcellularLocation>
</comment>
<comment type="similarity">
    <text evidence="1">Belongs to the RecX family.</text>
</comment>
<dbReference type="EMBL" id="BX950851">
    <property type="protein sequence ID" value="CAG76266.1"/>
    <property type="molecule type" value="Genomic_DNA"/>
</dbReference>
<dbReference type="RefSeq" id="WP_011094880.1">
    <property type="nucleotide sequence ID" value="NC_004547.2"/>
</dbReference>
<dbReference type="SMR" id="Q6D1S9"/>
<dbReference type="STRING" id="218491.ECA3368"/>
<dbReference type="KEGG" id="eca:ECA3368"/>
<dbReference type="PATRIC" id="fig|218491.5.peg.3422"/>
<dbReference type="eggNOG" id="COG2137">
    <property type="taxonomic scope" value="Bacteria"/>
</dbReference>
<dbReference type="HOGENOM" id="CLU_066607_3_2_6"/>
<dbReference type="OrthoDB" id="7066780at2"/>
<dbReference type="Proteomes" id="UP000007966">
    <property type="component" value="Chromosome"/>
</dbReference>
<dbReference type="GO" id="GO:0005737">
    <property type="term" value="C:cytoplasm"/>
    <property type="evidence" value="ECO:0007669"/>
    <property type="project" value="UniProtKB-SubCell"/>
</dbReference>
<dbReference type="GO" id="GO:0006282">
    <property type="term" value="P:regulation of DNA repair"/>
    <property type="evidence" value="ECO:0007669"/>
    <property type="project" value="UniProtKB-UniRule"/>
</dbReference>
<dbReference type="Gene3D" id="1.10.10.10">
    <property type="entry name" value="Winged helix-like DNA-binding domain superfamily/Winged helix DNA-binding domain"/>
    <property type="match status" value="3"/>
</dbReference>
<dbReference type="HAMAP" id="MF_01114">
    <property type="entry name" value="RecX"/>
    <property type="match status" value="1"/>
</dbReference>
<dbReference type="InterPro" id="IPR053924">
    <property type="entry name" value="RecX_HTH_2nd"/>
</dbReference>
<dbReference type="InterPro" id="IPR053925">
    <property type="entry name" value="RecX_HTH_3rd"/>
</dbReference>
<dbReference type="InterPro" id="IPR003783">
    <property type="entry name" value="Regulatory_RecX"/>
</dbReference>
<dbReference type="InterPro" id="IPR036388">
    <property type="entry name" value="WH-like_DNA-bd_sf"/>
</dbReference>
<dbReference type="NCBIfam" id="NF001053">
    <property type="entry name" value="PRK00117.1-3"/>
    <property type="match status" value="1"/>
</dbReference>
<dbReference type="PANTHER" id="PTHR33602">
    <property type="entry name" value="REGULATORY PROTEIN RECX FAMILY PROTEIN"/>
    <property type="match status" value="1"/>
</dbReference>
<dbReference type="PANTHER" id="PTHR33602:SF1">
    <property type="entry name" value="REGULATORY PROTEIN RECX FAMILY PROTEIN"/>
    <property type="match status" value="1"/>
</dbReference>
<dbReference type="Pfam" id="PF02631">
    <property type="entry name" value="RecX_HTH2"/>
    <property type="match status" value="1"/>
</dbReference>
<dbReference type="Pfam" id="PF21981">
    <property type="entry name" value="RecX_HTH3"/>
    <property type="match status" value="1"/>
</dbReference>
<reference key="1">
    <citation type="journal article" date="2004" name="Proc. Natl. Acad. Sci. U.S.A.">
        <title>Genome sequence of the enterobacterial phytopathogen Erwinia carotovora subsp. atroseptica and characterization of virulence factors.</title>
        <authorList>
            <person name="Bell K.S."/>
            <person name="Sebaihia M."/>
            <person name="Pritchard L."/>
            <person name="Holden M.T.G."/>
            <person name="Hyman L.J."/>
            <person name="Holeva M.C."/>
            <person name="Thomson N.R."/>
            <person name="Bentley S.D."/>
            <person name="Churcher L.J.C."/>
            <person name="Mungall K."/>
            <person name="Atkin R."/>
            <person name="Bason N."/>
            <person name="Brooks K."/>
            <person name="Chillingworth T."/>
            <person name="Clark K."/>
            <person name="Doggett J."/>
            <person name="Fraser A."/>
            <person name="Hance Z."/>
            <person name="Hauser H."/>
            <person name="Jagels K."/>
            <person name="Moule S."/>
            <person name="Norbertczak H."/>
            <person name="Ormond D."/>
            <person name="Price C."/>
            <person name="Quail M.A."/>
            <person name="Sanders M."/>
            <person name="Walker D."/>
            <person name="Whitehead S."/>
            <person name="Salmond G.P.C."/>
            <person name="Birch P.R.J."/>
            <person name="Parkhill J."/>
            <person name="Toth I.K."/>
        </authorList>
    </citation>
    <scope>NUCLEOTIDE SEQUENCE [LARGE SCALE GENOMIC DNA]</scope>
    <source>
        <strain>SCRI 1043 / ATCC BAA-672</strain>
    </source>
</reference>
<evidence type="ECO:0000255" key="1">
    <source>
        <dbReference type="HAMAP-Rule" id="MF_01114"/>
    </source>
</evidence>
<keyword id="KW-0963">Cytoplasm</keyword>
<keyword id="KW-1185">Reference proteome</keyword>